<keyword id="KW-1015">Disulfide bond</keyword>
<keyword id="KW-0960">Knottin</keyword>
<keyword id="KW-0708">Seed storage protein</keyword>
<keyword id="KW-0732">Signal</keyword>
<keyword id="KW-0758">Storage protein</keyword>
<keyword id="KW-0800">Toxin</keyword>
<evidence type="ECO:0000250" key="1"/>
<evidence type="ECO:0000255" key="2"/>
<gene>
    <name type="primary">LEG</name>
</gene>
<dbReference type="EMBL" id="AB052880">
    <property type="protein sequence ID" value="BAB19937.1"/>
    <property type="molecule type" value="Genomic_DNA"/>
</dbReference>
<dbReference type="SMR" id="Q9FRT9"/>
<dbReference type="GO" id="GO:0045735">
    <property type="term" value="F:nutrient reservoir activity"/>
    <property type="evidence" value="ECO:0007669"/>
    <property type="project" value="UniProtKB-KW"/>
</dbReference>
<dbReference type="GO" id="GO:0090729">
    <property type="term" value="F:toxin activity"/>
    <property type="evidence" value="ECO:0007669"/>
    <property type="project" value="UniProtKB-KW"/>
</dbReference>
<dbReference type="InterPro" id="IPR012512">
    <property type="entry name" value="Albumin_I"/>
</dbReference>
<dbReference type="InterPro" id="IPR032000">
    <property type="entry name" value="Albumin_I_a"/>
</dbReference>
<dbReference type="Pfam" id="PF08027">
    <property type="entry name" value="Albumin_I"/>
    <property type="match status" value="1"/>
</dbReference>
<dbReference type="Pfam" id="PF16720">
    <property type="entry name" value="Albumin_I_a"/>
    <property type="match status" value="1"/>
</dbReference>
<dbReference type="SUPFAM" id="SSF57059">
    <property type="entry name" value="omega toxin-like"/>
    <property type="match status" value="1"/>
</dbReference>
<reference key="1">
    <citation type="journal article" date="2003" name="Eur. J. Biochem.">
        <title>A possible physiological function and the tertiary structure of a 4-kDa peptide in legumes.</title>
        <authorList>
            <person name="Yamazaki T."/>
            <person name="Takaoka M."/>
            <person name="Katoh E."/>
            <person name="Hanada K."/>
            <person name="Sakita M."/>
            <person name="Sakata K."/>
            <person name="Nishiuchi Y."/>
            <person name="Hirano H."/>
        </authorList>
    </citation>
    <scope>NUCLEOTIDE SEQUENCE [GENOMIC DNA]</scope>
    <source>
        <strain>cv. Dainagonazuki</strain>
        <tissue>Leaf</tissue>
    </source>
</reference>
<feature type="signal peptide" evidence="2">
    <location>
        <begin position="1" status="less than"/>
        <end position="1"/>
    </location>
</feature>
<feature type="chain" id="PRO_0000032246" description="Albumin-1 chain b" evidence="1">
    <location>
        <begin position="2"/>
        <end position="39"/>
    </location>
</feature>
<feature type="propeptide" id="PRO_0000032247" evidence="2">
    <location>
        <begin position="40"/>
        <end position="47"/>
    </location>
</feature>
<feature type="chain" id="PRO_0000032248" description="Albumin-1 chain a" evidence="2">
    <location>
        <begin position="48"/>
        <end position="90" status="greater than"/>
    </location>
</feature>
<feature type="disulfide bond" evidence="1">
    <location>
        <begin position="4"/>
        <end position="21"/>
    </location>
</feature>
<feature type="disulfide bond" evidence="1">
    <location>
        <begin position="8"/>
        <end position="23"/>
    </location>
</feature>
<feature type="disulfide bond" evidence="1">
    <location>
        <begin position="16"/>
        <end position="34"/>
    </location>
</feature>
<feature type="non-terminal residue">
    <location>
        <position position="1"/>
    </location>
</feature>
<feature type="non-terminal residue">
    <location>
        <position position="90"/>
    </location>
</feature>
<name>ALB1_PHAAN</name>
<comment type="function">
    <text evidence="1">A1b binds to basic 7S globulin (BG) and stimulates its phosphorylation activity.</text>
</comment>
<comment type="domain">
    <text evidence="1">The presence of a 'disulfide through disulfide knot' structurally defines this protein as a knottin.</text>
</comment>
<comment type="PTM">
    <text>The C-terminal glycine may be removed from A1b.</text>
</comment>
<proteinExistence type="inferred from homology"/>
<organism>
    <name type="scientific">Phaseolus angularis</name>
    <name type="common">Azuki bean</name>
    <name type="synonym">Vigna angularis</name>
    <dbReference type="NCBI Taxonomy" id="3914"/>
    <lineage>
        <taxon>Eukaryota</taxon>
        <taxon>Viridiplantae</taxon>
        <taxon>Streptophyta</taxon>
        <taxon>Embryophyta</taxon>
        <taxon>Tracheophyta</taxon>
        <taxon>Spermatophyta</taxon>
        <taxon>Magnoliopsida</taxon>
        <taxon>eudicotyledons</taxon>
        <taxon>Gunneridae</taxon>
        <taxon>Pentapetalae</taxon>
        <taxon>rosids</taxon>
        <taxon>fabids</taxon>
        <taxon>Fabales</taxon>
        <taxon>Fabaceae</taxon>
        <taxon>Papilionoideae</taxon>
        <taxon>50 kb inversion clade</taxon>
        <taxon>NPAAA clade</taxon>
        <taxon>indigoferoid/millettioid clade</taxon>
        <taxon>Phaseoleae</taxon>
        <taxon>Vigna</taxon>
    </lineage>
</organism>
<protein>
    <recommendedName>
        <fullName>Albumin-1</fullName>
        <shortName>A1</shortName>
    </recommendedName>
    <component>
        <recommendedName>
            <fullName>Albumin-1 chain b</fullName>
            <shortName>A1b</shortName>
        </recommendedName>
        <alternativeName>
            <fullName>Leginsulin</fullName>
        </alternativeName>
    </component>
    <component>
        <recommendedName>
            <fullName>Albumin-1 chain a</fullName>
            <shortName>A1a</shortName>
        </recommendedName>
    </component>
</protein>
<accession>Q9FRT9</accession>
<sequence length="90" mass="9701">AADCNGACSPFQMPPCGSTDCLCIPAGLLFVGYCTYPSGLSSVAKMIDEHPNLCQSDDECMKKGSGNFCARYPNNYMDYGWCFDSDSEAL</sequence>